<proteinExistence type="inferred from homology"/>
<protein>
    <recommendedName>
        <fullName evidence="1">Large ribosomal subunit protein uL6</fullName>
    </recommendedName>
    <alternativeName>
        <fullName evidence="2">50S ribosomal protein L6</fullName>
    </alternativeName>
</protein>
<comment type="function">
    <text evidence="1">This protein binds to the 23S rRNA, and is important in its secondary structure. It is located near the subunit interface in the base of the L7/L12 stalk, and near the tRNA binding site of the peptidyltransferase center.</text>
</comment>
<comment type="subunit">
    <text evidence="1">Part of the 50S ribosomal subunit.</text>
</comment>
<comment type="similarity">
    <text evidence="1">Belongs to the universal ribosomal protein uL6 family.</text>
</comment>
<gene>
    <name evidence="1" type="primary">rplF</name>
    <name type="ordered locus">NT01CX_1130</name>
</gene>
<reference key="1">
    <citation type="journal article" date="2006" name="Nat. Biotechnol.">
        <title>The genome and transcriptomes of the anti-tumor agent Clostridium novyi-NT.</title>
        <authorList>
            <person name="Bettegowda C."/>
            <person name="Huang X."/>
            <person name="Lin J."/>
            <person name="Cheong I."/>
            <person name="Kohli M."/>
            <person name="Szabo S.A."/>
            <person name="Zhang X."/>
            <person name="Diaz L.A. Jr."/>
            <person name="Velculescu V.E."/>
            <person name="Parmigiani G."/>
            <person name="Kinzler K.W."/>
            <person name="Vogelstein B."/>
            <person name="Zhou S."/>
        </authorList>
    </citation>
    <scope>NUCLEOTIDE SEQUENCE [LARGE SCALE GENOMIC DNA]</scope>
    <source>
        <strain>NT</strain>
    </source>
</reference>
<keyword id="KW-1185">Reference proteome</keyword>
<keyword id="KW-0687">Ribonucleoprotein</keyword>
<keyword id="KW-0689">Ribosomal protein</keyword>
<keyword id="KW-0694">RNA-binding</keyword>
<keyword id="KW-0699">rRNA-binding</keyword>
<name>RL6_CLONN</name>
<dbReference type="EMBL" id="CP000382">
    <property type="protein sequence ID" value="ABK60387.1"/>
    <property type="molecule type" value="Genomic_DNA"/>
</dbReference>
<dbReference type="RefSeq" id="WP_011721225.1">
    <property type="nucleotide sequence ID" value="NC_008593.1"/>
</dbReference>
<dbReference type="SMR" id="A0PXW1"/>
<dbReference type="STRING" id="386415.NT01CX_1130"/>
<dbReference type="KEGG" id="cno:NT01CX_1130"/>
<dbReference type="eggNOG" id="COG0097">
    <property type="taxonomic scope" value="Bacteria"/>
</dbReference>
<dbReference type="HOGENOM" id="CLU_065464_1_2_9"/>
<dbReference type="Proteomes" id="UP000008220">
    <property type="component" value="Chromosome"/>
</dbReference>
<dbReference type="GO" id="GO:0022625">
    <property type="term" value="C:cytosolic large ribosomal subunit"/>
    <property type="evidence" value="ECO:0007669"/>
    <property type="project" value="TreeGrafter"/>
</dbReference>
<dbReference type="GO" id="GO:0019843">
    <property type="term" value="F:rRNA binding"/>
    <property type="evidence" value="ECO:0007669"/>
    <property type="project" value="UniProtKB-UniRule"/>
</dbReference>
<dbReference type="GO" id="GO:0003735">
    <property type="term" value="F:structural constituent of ribosome"/>
    <property type="evidence" value="ECO:0007669"/>
    <property type="project" value="InterPro"/>
</dbReference>
<dbReference type="GO" id="GO:0002181">
    <property type="term" value="P:cytoplasmic translation"/>
    <property type="evidence" value="ECO:0007669"/>
    <property type="project" value="TreeGrafter"/>
</dbReference>
<dbReference type="FunFam" id="3.90.930.12:FF:000001">
    <property type="entry name" value="50S ribosomal protein L6"/>
    <property type="match status" value="1"/>
</dbReference>
<dbReference type="FunFam" id="3.90.930.12:FF:000002">
    <property type="entry name" value="50S ribosomal protein L6"/>
    <property type="match status" value="1"/>
</dbReference>
<dbReference type="Gene3D" id="3.90.930.12">
    <property type="entry name" value="Ribosomal protein L6, alpha-beta domain"/>
    <property type="match status" value="2"/>
</dbReference>
<dbReference type="HAMAP" id="MF_01365_B">
    <property type="entry name" value="Ribosomal_uL6_B"/>
    <property type="match status" value="1"/>
</dbReference>
<dbReference type="InterPro" id="IPR000702">
    <property type="entry name" value="Ribosomal_uL6-like"/>
</dbReference>
<dbReference type="InterPro" id="IPR036789">
    <property type="entry name" value="Ribosomal_uL6-like_a/b-dom_sf"/>
</dbReference>
<dbReference type="InterPro" id="IPR020040">
    <property type="entry name" value="Ribosomal_uL6_a/b-dom"/>
</dbReference>
<dbReference type="InterPro" id="IPR019906">
    <property type="entry name" value="Ribosomal_uL6_bac-type"/>
</dbReference>
<dbReference type="InterPro" id="IPR002358">
    <property type="entry name" value="Ribosomal_uL6_CS"/>
</dbReference>
<dbReference type="NCBIfam" id="TIGR03654">
    <property type="entry name" value="L6_bact"/>
    <property type="match status" value="1"/>
</dbReference>
<dbReference type="PANTHER" id="PTHR11655">
    <property type="entry name" value="60S/50S RIBOSOMAL PROTEIN L6/L9"/>
    <property type="match status" value="1"/>
</dbReference>
<dbReference type="PANTHER" id="PTHR11655:SF14">
    <property type="entry name" value="LARGE RIBOSOMAL SUBUNIT PROTEIN UL6M"/>
    <property type="match status" value="1"/>
</dbReference>
<dbReference type="Pfam" id="PF00347">
    <property type="entry name" value="Ribosomal_L6"/>
    <property type="match status" value="2"/>
</dbReference>
<dbReference type="PIRSF" id="PIRSF002162">
    <property type="entry name" value="Ribosomal_L6"/>
    <property type="match status" value="1"/>
</dbReference>
<dbReference type="PRINTS" id="PR00059">
    <property type="entry name" value="RIBOSOMALL6"/>
</dbReference>
<dbReference type="SUPFAM" id="SSF56053">
    <property type="entry name" value="Ribosomal protein L6"/>
    <property type="match status" value="2"/>
</dbReference>
<dbReference type="PROSITE" id="PS00525">
    <property type="entry name" value="RIBOSOMAL_L6_1"/>
    <property type="match status" value="1"/>
</dbReference>
<sequence length="179" mass="19557">MSRVGRLPIEIPNGVNVTVTPENVVTVKGPKGELTKAMHEDMNIAVEENNIVVTRPSENVQHKALHGLTRALINNMVVGVTQGYEKTLELVGVGYRAQLKGKDLTLNLGYSHPVEIKAVKGVEYKVPEPTKVVVSGIDKELVGSVAANIRVWRKPEPYKGKGIKYAGEVIRRKEGKTGK</sequence>
<feature type="chain" id="PRO_1000055223" description="Large ribosomal subunit protein uL6">
    <location>
        <begin position="1"/>
        <end position="179"/>
    </location>
</feature>
<evidence type="ECO:0000255" key="1">
    <source>
        <dbReference type="HAMAP-Rule" id="MF_01365"/>
    </source>
</evidence>
<evidence type="ECO:0000305" key="2"/>
<accession>A0PXW1</accession>
<organism>
    <name type="scientific">Clostridium novyi (strain NT)</name>
    <dbReference type="NCBI Taxonomy" id="386415"/>
    <lineage>
        <taxon>Bacteria</taxon>
        <taxon>Bacillati</taxon>
        <taxon>Bacillota</taxon>
        <taxon>Clostridia</taxon>
        <taxon>Eubacteriales</taxon>
        <taxon>Clostridiaceae</taxon>
        <taxon>Clostridium</taxon>
    </lineage>
</organism>